<evidence type="ECO:0000256" key="1">
    <source>
        <dbReference type="SAM" id="MobiDB-lite"/>
    </source>
</evidence>
<evidence type="ECO:0000303" key="2">
    <source>
    </source>
</evidence>
<evidence type="ECO:0000305" key="3"/>
<evidence type="ECO:0007744" key="4">
    <source>
    </source>
</evidence>
<name>RK15_ARATH</name>
<gene>
    <name type="primary">RPL15</name>
    <name type="ordered locus">At3g25920</name>
    <name type="ORF">MPE11.32</name>
    <name type="ORF">MPE11.9</name>
    <name type="ORF">MPE11_7</name>
</gene>
<dbReference type="EMBL" id="Z11508">
    <property type="protein sequence ID" value="CAA77593.1"/>
    <property type="molecule type" value="Genomic_DNA"/>
</dbReference>
<dbReference type="EMBL" id="Z11507">
    <property type="protein sequence ID" value="CAA77592.1"/>
    <property type="molecule type" value="mRNA"/>
</dbReference>
<dbReference type="EMBL" id="AB023041">
    <property type="protein sequence ID" value="BAB01055.1"/>
    <property type="molecule type" value="Genomic_DNA"/>
</dbReference>
<dbReference type="EMBL" id="CP002686">
    <property type="protein sequence ID" value="AEE77091.1"/>
    <property type="molecule type" value="Genomic_DNA"/>
</dbReference>
<dbReference type="EMBL" id="AY059125">
    <property type="protein sequence ID" value="AAL15231.1"/>
    <property type="molecule type" value="mRNA"/>
</dbReference>
<dbReference type="EMBL" id="AF370235">
    <property type="protein sequence ID" value="AAK44050.1"/>
    <property type="molecule type" value="mRNA"/>
</dbReference>
<dbReference type="EMBL" id="AF424601">
    <property type="protein sequence ID" value="AAL11595.1"/>
    <property type="molecule type" value="mRNA"/>
</dbReference>
<dbReference type="EMBL" id="AY084483">
    <property type="protein sequence ID" value="AAM61054.1"/>
    <property type="molecule type" value="mRNA"/>
</dbReference>
<dbReference type="PIR" id="S20944">
    <property type="entry name" value="R5MUL5"/>
</dbReference>
<dbReference type="RefSeq" id="NP_189221.1">
    <property type="nucleotide sequence ID" value="NM_113496.5"/>
</dbReference>
<dbReference type="SMR" id="P25873"/>
<dbReference type="BioGRID" id="7520">
    <property type="interactions" value="49"/>
</dbReference>
<dbReference type="FunCoup" id="P25873">
    <property type="interactions" value="1069"/>
</dbReference>
<dbReference type="IntAct" id="P25873">
    <property type="interactions" value="1"/>
</dbReference>
<dbReference type="STRING" id="3702.P25873"/>
<dbReference type="iPTMnet" id="P25873"/>
<dbReference type="MetOSite" id="P25873"/>
<dbReference type="PaxDb" id="3702-AT3G25920.1"/>
<dbReference type="ProteomicsDB" id="234844"/>
<dbReference type="EnsemblPlants" id="AT3G25920.1">
    <property type="protein sequence ID" value="AT3G25920.1"/>
    <property type="gene ID" value="AT3G25920"/>
</dbReference>
<dbReference type="GeneID" id="822189"/>
<dbReference type="Gramene" id="AT3G25920.1">
    <property type="protein sequence ID" value="AT3G25920.1"/>
    <property type="gene ID" value="AT3G25920"/>
</dbReference>
<dbReference type="KEGG" id="ath:AT3G25920"/>
<dbReference type="Araport" id="AT3G25920"/>
<dbReference type="TAIR" id="AT3G25920">
    <property type="gene designation" value="RPL15"/>
</dbReference>
<dbReference type="eggNOG" id="KOG0846">
    <property type="taxonomic scope" value="Eukaryota"/>
</dbReference>
<dbReference type="HOGENOM" id="CLU_055188_0_0_1"/>
<dbReference type="InParanoid" id="P25873"/>
<dbReference type="OMA" id="PLTSRHC"/>
<dbReference type="OrthoDB" id="361383at2759"/>
<dbReference type="PhylomeDB" id="P25873"/>
<dbReference type="PRO" id="PR:P25873"/>
<dbReference type="Proteomes" id="UP000006548">
    <property type="component" value="Chromosome 3"/>
</dbReference>
<dbReference type="ExpressionAtlas" id="P25873">
    <property type="expression patterns" value="baseline and differential"/>
</dbReference>
<dbReference type="GO" id="GO:0009507">
    <property type="term" value="C:chloroplast"/>
    <property type="evidence" value="ECO:0007005"/>
    <property type="project" value="TAIR"/>
</dbReference>
<dbReference type="GO" id="GO:0009941">
    <property type="term" value="C:chloroplast envelope"/>
    <property type="evidence" value="ECO:0007005"/>
    <property type="project" value="TAIR"/>
</dbReference>
<dbReference type="GO" id="GO:0009570">
    <property type="term" value="C:chloroplast stroma"/>
    <property type="evidence" value="ECO:0007005"/>
    <property type="project" value="TAIR"/>
</dbReference>
<dbReference type="GO" id="GO:0005829">
    <property type="term" value="C:cytosol"/>
    <property type="evidence" value="ECO:0007005"/>
    <property type="project" value="TAIR"/>
</dbReference>
<dbReference type="GO" id="GO:0000311">
    <property type="term" value="C:plastid large ribosomal subunit"/>
    <property type="evidence" value="ECO:0000304"/>
    <property type="project" value="TAIR"/>
</dbReference>
<dbReference type="GO" id="GO:0003729">
    <property type="term" value="F:mRNA binding"/>
    <property type="evidence" value="ECO:0000314"/>
    <property type="project" value="TAIR"/>
</dbReference>
<dbReference type="GO" id="GO:0003735">
    <property type="term" value="F:structural constituent of ribosome"/>
    <property type="evidence" value="ECO:0000250"/>
    <property type="project" value="TAIR"/>
</dbReference>
<dbReference type="GO" id="GO:0006412">
    <property type="term" value="P:translation"/>
    <property type="evidence" value="ECO:0000304"/>
    <property type="project" value="TAIR"/>
</dbReference>
<dbReference type="FunFam" id="3.100.10.10:FF:000009">
    <property type="entry name" value="50S ribosomal protein L15, chloroplastic"/>
    <property type="match status" value="1"/>
</dbReference>
<dbReference type="Gene3D" id="3.100.10.10">
    <property type="match status" value="1"/>
</dbReference>
<dbReference type="HAMAP" id="MF_01341">
    <property type="entry name" value="Ribosomal_uL15"/>
    <property type="match status" value="1"/>
</dbReference>
<dbReference type="InterPro" id="IPR030878">
    <property type="entry name" value="Ribosomal_uL15"/>
</dbReference>
<dbReference type="InterPro" id="IPR021131">
    <property type="entry name" value="Ribosomal_uL15/eL18"/>
</dbReference>
<dbReference type="InterPro" id="IPR036227">
    <property type="entry name" value="Ribosomal_uL15/eL18_sf"/>
</dbReference>
<dbReference type="InterPro" id="IPR005749">
    <property type="entry name" value="Ribosomal_uL15_bac-type"/>
</dbReference>
<dbReference type="InterPro" id="IPR001196">
    <property type="entry name" value="Ribosomal_uL15_CS"/>
</dbReference>
<dbReference type="NCBIfam" id="TIGR01071">
    <property type="entry name" value="rplO_bact"/>
    <property type="match status" value="1"/>
</dbReference>
<dbReference type="PANTHER" id="PTHR12934">
    <property type="entry name" value="50S RIBOSOMAL PROTEIN L15"/>
    <property type="match status" value="1"/>
</dbReference>
<dbReference type="PANTHER" id="PTHR12934:SF11">
    <property type="entry name" value="LARGE RIBOSOMAL SUBUNIT PROTEIN UL15M"/>
    <property type="match status" value="1"/>
</dbReference>
<dbReference type="Pfam" id="PF00828">
    <property type="entry name" value="Ribosomal_L27A"/>
    <property type="match status" value="1"/>
</dbReference>
<dbReference type="SUPFAM" id="SSF52080">
    <property type="entry name" value="Ribosomal proteins L15p and L18e"/>
    <property type="match status" value="1"/>
</dbReference>
<dbReference type="PROSITE" id="PS00475">
    <property type="entry name" value="RIBOSOMAL_L15"/>
    <property type="match status" value="1"/>
</dbReference>
<organism>
    <name type="scientific">Arabidopsis thaliana</name>
    <name type="common">Mouse-ear cress</name>
    <dbReference type="NCBI Taxonomy" id="3702"/>
    <lineage>
        <taxon>Eukaryota</taxon>
        <taxon>Viridiplantae</taxon>
        <taxon>Streptophyta</taxon>
        <taxon>Embryophyta</taxon>
        <taxon>Tracheophyta</taxon>
        <taxon>Spermatophyta</taxon>
        <taxon>Magnoliopsida</taxon>
        <taxon>eudicotyledons</taxon>
        <taxon>Gunneridae</taxon>
        <taxon>Pentapetalae</taxon>
        <taxon>rosids</taxon>
        <taxon>malvids</taxon>
        <taxon>Brassicales</taxon>
        <taxon>Brassicaceae</taxon>
        <taxon>Camelineae</taxon>
        <taxon>Arabidopsis</taxon>
    </lineage>
</organism>
<keyword id="KW-0007">Acetylation</keyword>
<keyword id="KW-0150">Chloroplast</keyword>
<keyword id="KW-0934">Plastid</keyword>
<keyword id="KW-1185">Reference proteome</keyword>
<keyword id="KW-0687">Ribonucleoprotein</keyword>
<keyword id="KW-0689">Ribosomal protein</keyword>
<keyword id="KW-0809">Transit peptide</keyword>
<protein>
    <recommendedName>
        <fullName evidence="2">Large ribosomal subunit protein uL15c</fullName>
    </recommendedName>
    <alternativeName>
        <fullName>50S ribosomal protein L15, chloroplastic</fullName>
    </alternativeName>
    <alternativeName>
        <fullName>CL15</fullName>
    </alternativeName>
</protein>
<comment type="subunit">
    <text>Part of the 50S ribosomal subunit.</text>
</comment>
<comment type="subcellular location">
    <subcellularLocation>
        <location>Plastid</location>
        <location>Chloroplast</location>
    </subcellularLocation>
</comment>
<comment type="similarity">
    <text evidence="3">Belongs to the universal ribosomal protein uL15 family.</text>
</comment>
<accession>P25873</accession>
<accession>Q9LU99</accession>
<proteinExistence type="evidence at protein level"/>
<feature type="transit peptide" description="Chloroplast" evidence="4">
    <location>
        <begin position="1"/>
        <end position="67"/>
    </location>
</feature>
<feature type="chain" id="PRO_0000030466" description="Large ribosomal subunit protein uL15c">
    <location>
        <begin position="68"/>
        <end position="277"/>
    </location>
</feature>
<feature type="region of interest" description="Disordered" evidence="1">
    <location>
        <begin position="81"/>
        <end position="125"/>
    </location>
</feature>
<feature type="compositionally biased region" description="Basic residues" evidence="1">
    <location>
        <begin position="92"/>
        <end position="101"/>
    </location>
</feature>
<feature type="compositionally biased region" description="Gly residues" evidence="1">
    <location>
        <begin position="103"/>
        <end position="115"/>
    </location>
</feature>
<feature type="modified residue" description="N-acetylthreonine" evidence="4">
    <location>
        <position position="68"/>
    </location>
</feature>
<feature type="sequence conflict" description="In Ref. 1; CAA77593/CAA77592." evidence="3" ref="1">
    <original>G</original>
    <variation>E</variation>
    <location>
        <position position="238"/>
    </location>
</feature>
<reference key="1">
    <citation type="journal article" date="1992" name="Plant Mol. Biol.">
        <title>Characterization of rps17, rp19 and rpl15: three nucleus-encoded plastid ribosomal protein genes.</title>
        <authorList>
            <person name="Thompson M.D."/>
            <person name="Jacks C.M."/>
            <person name="Lenvik T.R."/>
            <person name="Gantt J.S."/>
        </authorList>
    </citation>
    <scope>NUCLEOTIDE SEQUENCE [GENOMIC DNA / MRNA]</scope>
    <source>
        <strain>cv. Columbia</strain>
    </source>
</reference>
<reference key="2">
    <citation type="journal article" date="2000" name="DNA Res.">
        <title>Structural analysis of Arabidopsis thaliana chromosome 3. I. Sequence features of the regions of 4,504,864 bp covered by sixty P1 and TAC clones.</title>
        <authorList>
            <person name="Sato S."/>
            <person name="Nakamura Y."/>
            <person name="Kaneko T."/>
            <person name="Katoh T."/>
            <person name="Asamizu E."/>
            <person name="Tabata S."/>
        </authorList>
    </citation>
    <scope>NUCLEOTIDE SEQUENCE [LARGE SCALE GENOMIC DNA]</scope>
    <source>
        <strain>cv. Columbia</strain>
    </source>
</reference>
<reference key="3">
    <citation type="journal article" date="2017" name="Plant J.">
        <title>Araport11: a complete reannotation of the Arabidopsis thaliana reference genome.</title>
        <authorList>
            <person name="Cheng C.Y."/>
            <person name="Krishnakumar V."/>
            <person name="Chan A.P."/>
            <person name="Thibaud-Nissen F."/>
            <person name="Schobel S."/>
            <person name="Town C.D."/>
        </authorList>
    </citation>
    <scope>GENOME REANNOTATION</scope>
    <source>
        <strain>cv. Columbia</strain>
    </source>
</reference>
<reference key="4">
    <citation type="journal article" date="2003" name="Science">
        <title>Empirical analysis of transcriptional activity in the Arabidopsis genome.</title>
        <authorList>
            <person name="Yamada K."/>
            <person name="Lim J."/>
            <person name="Dale J.M."/>
            <person name="Chen H."/>
            <person name="Shinn P."/>
            <person name="Palm C.J."/>
            <person name="Southwick A.M."/>
            <person name="Wu H.C."/>
            <person name="Kim C.J."/>
            <person name="Nguyen M."/>
            <person name="Pham P.K."/>
            <person name="Cheuk R.F."/>
            <person name="Karlin-Newmann G."/>
            <person name="Liu S.X."/>
            <person name="Lam B."/>
            <person name="Sakano H."/>
            <person name="Wu T."/>
            <person name="Yu G."/>
            <person name="Miranda M."/>
            <person name="Quach H.L."/>
            <person name="Tripp M."/>
            <person name="Chang C.H."/>
            <person name="Lee J.M."/>
            <person name="Toriumi M.J."/>
            <person name="Chan M.M."/>
            <person name="Tang C.C."/>
            <person name="Onodera C.S."/>
            <person name="Deng J.M."/>
            <person name="Akiyama K."/>
            <person name="Ansari Y."/>
            <person name="Arakawa T."/>
            <person name="Banh J."/>
            <person name="Banno F."/>
            <person name="Bowser L."/>
            <person name="Brooks S.Y."/>
            <person name="Carninci P."/>
            <person name="Chao Q."/>
            <person name="Choy N."/>
            <person name="Enju A."/>
            <person name="Goldsmith A.D."/>
            <person name="Gurjal M."/>
            <person name="Hansen N.F."/>
            <person name="Hayashizaki Y."/>
            <person name="Johnson-Hopson C."/>
            <person name="Hsuan V.W."/>
            <person name="Iida K."/>
            <person name="Karnes M."/>
            <person name="Khan S."/>
            <person name="Koesema E."/>
            <person name="Ishida J."/>
            <person name="Jiang P.X."/>
            <person name="Jones T."/>
            <person name="Kawai J."/>
            <person name="Kamiya A."/>
            <person name="Meyers C."/>
            <person name="Nakajima M."/>
            <person name="Narusaka M."/>
            <person name="Seki M."/>
            <person name="Sakurai T."/>
            <person name="Satou M."/>
            <person name="Tamse R."/>
            <person name="Vaysberg M."/>
            <person name="Wallender E.K."/>
            <person name="Wong C."/>
            <person name="Yamamura Y."/>
            <person name="Yuan S."/>
            <person name="Shinozaki K."/>
            <person name="Davis R.W."/>
            <person name="Theologis A."/>
            <person name="Ecker J.R."/>
        </authorList>
    </citation>
    <scope>NUCLEOTIDE SEQUENCE [LARGE SCALE MRNA]</scope>
    <source>
        <strain>cv. Columbia</strain>
    </source>
</reference>
<reference key="5">
    <citation type="submission" date="2002-03" db="EMBL/GenBank/DDBJ databases">
        <title>Full-length cDNA from Arabidopsis thaliana.</title>
        <authorList>
            <person name="Brover V.V."/>
            <person name="Troukhan M.E."/>
            <person name="Alexandrov N.A."/>
            <person name="Lu Y.-P."/>
            <person name="Flavell R.B."/>
            <person name="Feldmann K.A."/>
        </authorList>
    </citation>
    <scope>NUCLEOTIDE SEQUENCE [LARGE SCALE MRNA]</scope>
</reference>
<reference key="6">
    <citation type="journal article" date="2012" name="Mol. Cell. Proteomics">
        <title>Comparative large-scale characterisation of plant vs. mammal proteins reveals similar and idiosyncratic N-alpha acetylation features.</title>
        <authorList>
            <person name="Bienvenut W.V."/>
            <person name="Sumpton D."/>
            <person name="Martinez A."/>
            <person name="Lilla S."/>
            <person name="Espagne C."/>
            <person name="Meinnel T."/>
            <person name="Giglione C."/>
        </authorList>
    </citation>
    <scope>ACETYLATION [LARGE SCALE ANALYSIS] AT THR-68</scope>
    <scope>CLEAVAGE OF TRANSIT PEPTIDE [LARGE SCALE ANALYSIS] AFTER GLN-67</scope>
    <scope>IDENTIFICATION BY MASS SPECTROMETRY [LARGE SCALE ANALYSIS]</scope>
</reference>
<reference key="7">
    <citation type="journal article" date="2023" name="Plant Cell">
        <title>An updated nomenclature for plant ribosomal protein genes.</title>
        <authorList>
            <person name="Scarpin M.R."/>
            <person name="Busche M."/>
            <person name="Martinez R.E."/>
            <person name="Harper L.C."/>
            <person name="Reiser L."/>
            <person name="Szakonyi D."/>
            <person name="Merchante C."/>
            <person name="Lan T."/>
            <person name="Xiong W."/>
            <person name="Mo B."/>
            <person name="Tang G."/>
            <person name="Chen X."/>
            <person name="Bailey-Serres J."/>
            <person name="Browning K.S."/>
            <person name="Brunkard J.O."/>
        </authorList>
    </citation>
    <scope>NOMENCLATURE</scope>
</reference>
<sequence>MATPLSISSNPLTSRHCYRLHLSSTSFKGNVSVLGANPSQILSLKLNQTLKTRNQQQFARPLVVVSQTAATSSAVVAPERFRLDNLGPQPGSRKKQKRKGRGISAGQGASCGFGMRGQKSRSGPGIMRGFEGGQTALYRRLPKLRGIAGGMRSGLPKYLPVNIKDIETAGFQEGDEVSLETLKQKGLINPSGRERKLPLKILGTGELSMKLTFKARAFSTQAKEKLEASGCTLTVLPGRKKWVKPSVAKNQARADEYFAKKRAAAAEAATSEPAASA</sequence>